<proteinExistence type="evidence at protein level"/>
<protein>
    <recommendedName>
        <fullName>B-phycoerythrin alpha chain</fullName>
    </recommendedName>
</protein>
<organism>
    <name type="scientific">Porphyridium sordidum</name>
    <name type="common">Red alga</name>
    <dbReference type="NCBI Taxonomy" id="28024"/>
    <lineage>
        <taxon>Eukaryota</taxon>
        <taxon>Rhodophyta</taxon>
        <taxon>Bangiophyceae</taxon>
        <taxon>Porphyridiales</taxon>
        <taxon>Porphyridiaceae</taxon>
        <taxon>Porphyridium</taxon>
    </lineage>
</organism>
<keyword id="KW-0042">Antenna complex</keyword>
<keyword id="KW-0089">Bile pigment</keyword>
<keyword id="KW-0150">Chloroplast</keyword>
<keyword id="KW-0157">Chromophore</keyword>
<keyword id="KW-0903">Direct protein sequencing</keyword>
<keyword id="KW-0249">Electron transport</keyword>
<keyword id="KW-0472">Membrane</keyword>
<keyword id="KW-0602">Photosynthesis</keyword>
<keyword id="KW-0605">Phycobilisome</keyword>
<keyword id="KW-0934">Plastid</keyword>
<keyword id="KW-0793">Thylakoid</keyword>
<keyword id="KW-0813">Transport</keyword>
<dbReference type="PIR" id="S27326">
    <property type="entry name" value="S27326"/>
</dbReference>
<dbReference type="SMR" id="P29947"/>
<dbReference type="GO" id="GO:0009535">
    <property type="term" value="C:chloroplast thylakoid membrane"/>
    <property type="evidence" value="ECO:0007669"/>
    <property type="project" value="UniProtKB-SubCell"/>
</dbReference>
<dbReference type="GO" id="GO:0030089">
    <property type="term" value="C:phycobilisome"/>
    <property type="evidence" value="ECO:0007669"/>
    <property type="project" value="UniProtKB-KW"/>
</dbReference>
<dbReference type="GO" id="GO:0015979">
    <property type="term" value="P:photosynthesis"/>
    <property type="evidence" value="ECO:0007669"/>
    <property type="project" value="UniProtKB-KW"/>
</dbReference>
<dbReference type="CDD" id="cd14769">
    <property type="entry name" value="PE_alpha"/>
    <property type="match status" value="1"/>
</dbReference>
<dbReference type="Gene3D" id="1.10.490.20">
    <property type="entry name" value="Phycocyanins"/>
    <property type="match status" value="1"/>
</dbReference>
<dbReference type="InterPro" id="IPR009050">
    <property type="entry name" value="Globin-like_sf"/>
</dbReference>
<dbReference type="InterPro" id="IPR012128">
    <property type="entry name" value="Phycobilisome_asu/bsu"/>
</dbReference>
<dbReference type="InterPro" id="IPR038719">
    <property type="entry name" value="Phycobilisome_asu/bsu_sf"/>
</dbReference>
<dbReference type="PANTHER" id="PTHR34011:SF4">
    <property type="entry name" value="C-PHYCOCYANIN ALPHA SUBUNIT"/>
    <property type="match status" value="1"/>
</dbReference>
<dbReference type="PANTHER" id="PTHR34011">
    <property type="entry name" value="PHYCOBILISOME 32.1 KDA LINKER POLYPEPTIDE, PHYCOCYANIN-ASSOCIATED, ROD 2-RELATED"/>
    <property type="match status" value="1"/>
</dbReference>
<dbReference type="Pfam" id="PF00502">
    <property type="entry name" value="Phycobilisome"/>
    <property type="match status" value="1"/>
</dbReference>
<dbReference type="PIRSF" id="PIRSF000081">
    <property type="entry name" value="Phycocyanin"/>
    <property type="match status" value="1"/>
</dbReference>
<dbReference type="SUPFAM" id="SSF46458">
    <property type="entry name" value="Globin-like"/>
    <property type="match status" value="1"/>
</dbReference>
<sequence length="164" mass="17831">MKSVITTVISAADAAGRFPSNSDLESIQGNIQRSAARLEAAEKLAGNHEAVVKEAGDACFAKYAYLKNPGEAGENQEKINKCYRDVDHYMRLVNYDLVVGGTGPLDEWGIAGAREVYRTLNLPTSAYVASIAYTRDRLCVPRDMSAQAGVEFSAYLDYLINALS</sequence>
<feature type="chain" id="PRO_0000199178" description="B-phycoerythrin alpha chain">
    <location>
        <begin position="1"/>
        <end position="164"/>
    </location>
</feature>
<feature type="binding site" description="covalent">
    <location>
        <position position="82"/>
    </location>
    <ligand>
        <name>(2R,3E)-phycoerythrobilin</name>
        <dbReference type="ChEBI" id="CHEBI:85276"/>
        <label>1</label>
    </ligand>
</feature>
<feature type="binding site" description="covalent">
    <location>
        <position position="139"/>
    </location>
    <ligand>
        <name>(2R,3E)-phycoerythrobilin</name>
        <dbReference type="ChEBI" id="CHEBI:85276"/>
        <label>2</label>
    </ligand>
</feature>
<accession>P29947</accession>
<name>PHEA_PORSO</name>
<evidence type="ECO:0000250" key="1"/>
<evidence type="ECO:0000305" key="2"/>
<reference key="1">
    <citation type="journal article" date="1992" name="J. Mol. Biol.">
        <title>Isolation, crystallization, crystal structure analysis and refinement of B-phycoerythrin from the red alga Porphyridium sordidum at 2.2-A resolution.</title>
        <authorList>
            <person name="Ficner R."/>
            <person name="Lobeck K."/>
            <person name="Schmidt G."/>
            <person name="Huber R."/>
        </authorList>
    </citation>
    <scope>X-RAY CRYSTALLOGRAPHY (2.2 ANGSTROMS)</scope>
    <scope>CHROMOPHORE BINDING AT CYS-82 AND CYS-139</scope>
    <scope>PARTIAL PROTEIN SEQUENCE</scope>
</reference>
<gene>
    <name type="primary">cpeA</name>
</gene>
<comment type="function">
    <text>Light-harvesting photosynthetic bile pigment-protein from the phycobiliprotein complex.</text>
</comment>
<comment type="subunit">
    <text>Heteromer of 6 alpha, 6 beta and one gamma chain.</text>
</comment>
<comment type="subcellular location">
    <subcellularLocation>
        <location evidence="1">Plastid</location>
        <location evidence="1">Chloroplast thylakoid membrane</location>
        <topology evidence="1">Peripheral membrane protein</topology>
        <orientation evidence="1">Stromal side</orientation>
    </subcellularLocation>
    <text evidence="1">Forms the periphery of the phycobilisome rod.</text>
</comment>
<comment type="PTM">
    <text>Contains two covalently linked bilin chromophores.</text>
</comment>
<comment type="similarity">
    <text evidence="2">Belongs to the phycobiliprotein family.</text>
</comment>
<geneLocation type="chloroplast"/>